<protein>
    <recommendedName>
        <fullName evidence="9">Serine/threonine-protein kinase pakB</fullName>
        <shortName>dPAKb</shortName>
        <ecNumber>2.7.11.1</ecNumber>
    </recommendedName>
    <alternativeName>
        <fullName evidence="12">Myosin I heavy chain kinase</fullName>
    </alternativeName>
</protein>
<reference evidence="11 12" key="1">
    <citation type="journal article" date="1996" name="J. Biol. Chem.">
        <title>Cloning and characterization of a Dictyostelium myosin I heavy chain kinase activated by Cdc42 and Rac.</title>
        <authorList>
            <person name="Lee S.-F."/>
            <person name="Egelhoff T.T."/>
            <person name="Mahasneh A."/>
            <person name="Cote G.P."/>
        </authorList>
    </citation>
    <scope>NUCLEOTIDE SEQUENCE [MRNA] (ISOFORM 1)</scope>
    <scope>PROTEIN SEQUENCE OF 242-250; 353-358 AND 364-370</scope>
    <scope>FUNCTION</scope>
    <scope>AUTOPHOSPHORYLATION</scope>
    <source>
        <strain>AX3</strain>
    </source>
</reference>
<reference evidence="11 12" key="2">
    <citation type="journal article" date="1998" name="J. Biol. Chem.">
        <title>Regulation of the p21-activated kinase-related Dictyostelium myosin I heavy chain kinase by autophosphorylation, acidic phospholipids, and Ca2+-calmodulin.</title>
        <authorList>
            <person name="Lee S.-F."/>
            <person name="Mahasneh A."/>
            <person name="de la Roche M."/>
            <person name="Cote G.P."/>
        </authorList>
    </citation>
    <scope>SEQUENCE REVISION TO N-TERMINUS</scope>
    <scope>PROTEIN SEQUENCE OF 6-11 AND 740-745</scope>
    <scope>FUNCTION</scope>
    <scope>PHOSPHOLIPID-BINDING ACTIVITY</scope>
    <scope>SUBCELLULAR LOCATION</scope>
    <scope>MUTAGENESIS OF SER-4</scope>
    <scope>PHOSPHORYLATION AT SER-8</scope>
    <source>
        <strain>AX3</strain>
    </source>
</reference>
<reference evidence="11 13" key="3">
    <citation type="submission" date="1997-06" db="EMBL/GenBank/DDBJ databases">
        <title>Cloning and characterization of a ste20 homolog from Dictyostelium discoideum.</title>
        <authorList>
            <person name="Strom M."/>
        </authorList>
    </citation>
    <scope>NUCLEOTIDE SEQUENCE [MRNA] (ISOFORM 2)</scope>
    <source>
        <strain evidence="13">AX2</strain>
    </source>
</reference>
<reference evidence="14" key="4">
    <citation type="journal article" date="2002" name="Nature">
        <title>Sequence and analysis of chromosome 2 of Dictyostelium discoideum.</title>
        <authorList>
            <person name="Gloeckner G."/>
            <person name="Eichinger L."/>
            <person name="Szafranski K."/>
            <person name="Pachebat J.A."/>
            <person name="Bankier A.T."/>
            <person name="Dear P.H."/>
            <person name="Lehmann R."/>
            <person name="Baumgart C."/>
            <person name="Parra G."/>
            <person name="Abril J.F."/>
            <person name="Guigo R."/>
            <person name="Kumpf K."/>
            <person name="Tunggal B."/>
            <person name="Cox E.C."/>
            <person name="Quail M.A."/>
            <person name="Platzer M."/>
            <person name="Rosenthal A."/>
            <person name="Noegel A.A."/>
        </authorList>
    </citation>
    <scope>NUCLEOTIDE SEQUENCE [LARGE SCALE GENOMIC DNA]</scope>
    <source>
        <strain evidence="14">AX4</strain>
    </source>
</reference>
<reference evidence="14" key="5">
    <citation type="journal article" date="2005" name="Nature">
        <title>The genome of the social amoeba Dictyostelium discoideum.</title>
        <authorList>
            <person name="Eichinger L."/>
            <person name="Pachebat J.A."/>
            <person name="Gloeckner G."/>
            <person name="Rajandream M.A."/>
            <person name="Sucgang R."/>
            <person name="Berriman M."/>
            <person name="Song J."/>
            <person name="Olsen R."/>
            <person name="Szafranski K."/>
            <person name="Xu Q."/>
            <person name="Tunggal B."/>
            <person name="Kummerfeld S."/>
            <person name="Madera M."/>
            <person name="Konfortov B.A."/>
            <person name="Rivero F."/>
            <person name="Bankier A.T."/>
            <person name="Lehmann R."/>
            <person name="Hamlin N."/>
            <person name="Davies R."/>
            <person name="Gaudet P."/>
            <person name="Fey P."/>
            <person name="Pilcher K."/>
            <person name="Chen G."/>
            <person name="Saunders D."/>
            <person name="Sodergren E.J."/>
            <person name="Davis P."/>
            <person name="Kerhornou A."/>
            <person name="Nie X."/>
            <person name="Hall N."/>
            <person name="Anjard C."/>
            <person name="Hemphill L."/>
            <person name="Bason N."/>
            <person name="Farbrother P."/>
            <person name="Desany B."/>
            <person name="Just E."/>
            <person name="Morio T."/>
            <person name="Rost R."/>
            <person name="Churcher C.M."/>
            <person name="Cooper J."/>
            <person name="Haydock S."/>
            <person name="van Driessche N."/>
            <person name="Cronin A."/>
            <person name="Goodhead I."/>
            <person name="Muzny D.M."/>
            <person name="Mourier T."/>
            <person name="Pain A."/>
            <person name="Lu M."/>
            <person name="Harper D."/>
            <person name="Lindsay R."/>
            <person name="Hauser H."/>
            <person name="James K.D."/>
            <person name="Quiles M."/>
            <person name="Madan Babu M."/>
            <person name="Saito T."/>
            <person name="Buchrieser C."/>
            <person name="Wardroper A."/>
            <person name="Felder M."/>
            <person name="Thangavelu M."/>
            <person name="Johnson D."/>
            <person name="Knights A."/>
            <person name="Loulseged H."/>
            <person name="Mungall K.L."/>
            <person name="Oliver K."/>
            <person name="Price C."/>
            <person name="Quail M.A."/>
            <person name="Urushihara H."/>
            <person name="Hernandez J."/>
            <person name="Rabbinowitsch E."/>
            <person name="Steffen D."/>
            <person name="Sanders M."/>
            <person name="Ma J."/>
            <person name="Kohara Y."/>
            <person name="Sharp S."/>
            <person name="Simmonds M.N."/>
            <person name="Spiegler S."/>
            <person name="Tivey A."/>
            <person name="Sugano S."/>
            <person name="White B."/>
            <person name="Walker D."/>
            <person name="Woodward J.R."/>
            <person name="Winckler T."/>
            <person name="Tanaka Y."/>
            <person name="Shaulsky G."/>
            <person name="Schleicher M."/>
            <person name="Weinstock G.M."/>
            <person name="Rosenthal A."/>
            <person name="Cox E.C."/>
            <person name="Chisholm R.L."/>
            <person name="Gibbs R.A."/>
            <person name="Loomis W.F."/>
            <person name="Platzer M."/>
            <person name="Kay R.R."/>
            <person name="Williams J.G."/>
            <person name="Dear P.H."/>
            <person name="Noegel A.A."/>
            <person name="Barrell B.G."/>
            <person name="Kuspa A."/>
        </authorList>
    </citation>
    <scope>NUCLEOTIDE SEQUENCE [LARGE SCALE GENOMIC DNA]</scope>
    <source>
        <strain evidence="14">AX4</strain>
    </source>
</reference>
<reference evidence="11" key="6">
    <citation type="journal article" date="2005" name="Mol. Biol. Cell">
        <title>Cellular distribution and functions of wild-type and constitutively activated Dictyostelium PakB.</title>
        <authorList>
            <person name="de la Roche M."/>
            <person name="Mahasneh A."/>
            <person name="Lee S.-F."/>
            <person name="Rivero F."/>
            <person name="Cote G.P."/>
        </authorList>
    </citation>
    <scope>FUNCTION</scope>
    <scope>INTERACTION WITH RAC1A; RAC1B; RAC1C; RACA; RACB; RACC AND RACF1</scope>
    <scope>SUBCELLULAR LOCATION</scope>
</reference>
<evidence type="ECO:0000250" key="1">
    <source>
        <dbReference type="UniProtKB" id="P28523"/>
    </source>
</evidence>
<evidence type="ECO:0000255" key="2">
    <source>
        <dbReference type="PROSITE-ProRule" id="PRU00057"/>
    </source>
</evidence>
<evidence type="ECO:0000255" key="3">
    <source>
        <dbReference type="PROSITE-ProRule" id="PRU00159"/>
    </source>
</evidence>
<evidence type="ECO:0000256" key="4">
    <source>
        <dbReference type="SAM" id="MobiDB-lite"/>
    </source>
</evidence>
<evidence type="ECO:0000269" key="5">
    <source>
    </source>
</evidence>
<evidence type="ECO:0000269" key="6">
    <source>
    </source>
</evidence>
<evidence type="ECO:0000269" key="7">
    <source>
    </source>
</evidence>
<evidence type="ECO:0000269" key="8">
    <source ref="3"/>
</evidence>
<evidence type="ECO:0000303" key="9">
    <source>
    </source>
</evidence>
<evidence type="ECO:0000303" key="10">
    <source ref="3"/>
</evidence>
<evidence type="ECO:0000305" key="11"/>
<evidence type="ECO:0000312" key="12">
    <source>
        <dbReference type="EMBL" id="AAC71063.1"/>
    </source>
</evidence>
<evidence type="ECO:0000312" key="13">
    <source>
        <dbReference type="EMBL" id="CAA71240.1"/>
    </source>
</evidence>
<evidence type="ECO:0000312" key="14">
    <source>
        <dbReference type="EMBL" id="EAL69183.1"/>
    </source>
</evidence>
<gene>
    <name evidence="14" type="primary">pakB</name>
    <name evidence="13" type="synonym">Ddpak</name>
    <name evidence="12" type="synonym">mihck</name>
    <name type="ORF">DDB_G0276459</name>
</gene>
<proteinExistence type="evidence at protein level"/>
<accession>Q869N2</accession>
<accession>O00911</accession>
<accession>Q551M5</accession>
<accession>Q94488</accession>
<sequence>MEQSKRVSMMREKFEAQSNEAESSPPPNRKPPPPNKRVQTNGTSSLNSSGSSFVSPSPSPSPSPQQPVKRPLPSPGVNKQAPPALPTQPRPQQQQPEIPVRPTTPTRTPPNLINSNGTSGGSGFSSSSGNSGYSSSNNNNSNSNSSINMNGNHSNGLNGGSSNPVPMRKVSSPINIANGTTPPPPPQPTPSQQPQQSPSSASHNNTQHNIPSPPPLPNNKPKKLAPTAVPAGLGSIIGGPKTPAISPGSTSPSLGSSNGNIPISTTSTPITPTPPISVPLATSPNNSHKDSISNSNSNNNNNNNNNNNNNSSNATTSPPSPPVSNVGNKQDEEKKGFLSIFTNKKKNKDKKKEFSVGSPFNVKHNIHVNYHSVTGFEGLPKEWEVILQSSGITREDVVEHSEVVIDVLDFHMQQQQQQAQQEQQALMQKQMQQSGIPAHMLNNPKPPTIPIRDANKQPHNQLQPTPHQPPQHHHQQQPPQQHHHQQQQQQHNNNNNNNNNNNNNNNNQQSAQQQSAGILSQQQEQQLEEMMCGGAYDDEQYDLNNQPLPDETNVSLYDLVSQEDPTKLFGEGSTKIGEGAAGEVFVVTQLKTNNKVAIKKMPLNQQNMKLIVTEIGIMKSCRHQNIIDYIDSYLVGDSLWVAMEFMGGGCLTEILEQFNSVKLVEAQIAYVCAETLKGLAYIHSQHRIHRDIKSDNILLGSDGSVKLADFGYAAQLTKSKQKRVTIVGTPYWMAPELIRGQNYDRKVDIWSLGIMAMEMAESEPPYMSFPPLRALFLITTKGIPDLKDQNKWSDDFKDFVKKCLDKDVENRPEAKVLLNHPFLKTACNSNGLVPAIMEAKKAKEAHSKFSIH</sequence>
<keyword id="KW-0025">Alternative splicing</keyword>
<keyword id="KW-0067">ATP-binding</keyword>
<keyword id="KW-0963">Cytoplasm</keyword>
<keyword id="KW-0206">Cytoskeleton</keyword>
<keyword id="KW-0903">Direct protein sequencing</keyword>
<keyword id="KW-0418">Kinase</keyword>
<keyword id="KW-0460">Magnesium</keyword>
<keyword id="KW-0472">Membrane</keyword>
<keyword id="KW-0479">Metal-binding</keyword>
<keyword id="KW-0547">Nucleotide-binding</keyword>
<keyword id="KW-0581">Phagocytosis</keyword>
<keyword id="KW-0597">Phosphoprotein</keyword>
<keyword id="KW-1185">Reference proteome</keyword>
<keyword id="KW-0723">Serine/threonine-protein kinase</keyword>
<keyword id="KW-0808">Transferase</keyword>
<comment type="function">
    <text evidence="5 6 7">Regulator of the myosin I component of the cytoskeleton: required for regulation of cytokinesis, phagocytosis and pinocytosis.</text>
</comment>
<comment type="catalytic activity">
    <reaction evidence="5 6 7">
        <text>L-seryl-[protein] + ATP = O-phospho-L-seryl-[protein] + ADP + H(+)</text>
        <dbReference type="Rhea" id="RHEA:17989"/>
        <dbReference type="Rhea" id="RHEA-COMP:9863"/>
        <dbReference type="Rhea" id="RHEA-COMP:11604"/>
        <dbReference type="ChEBI" id="CHEBI:15378"/>
        <dbReference type="ChEBI" id="CHEBI:29999"/>
        <dbReference type="ChEBI" id="CHEBI:30616"/>
        <dbReference type="ChEBI" id="CHEBI:83421"/>
        <dbReference type="ChEBI" id="CHEBI:456216"/>
        <dbReference type="EC" id="2.7.11.1"/>
    </reaction>
</comment>
<comment type="catalytic activity">
    <reaction evidence="5 6 7">
        <text>L-threonyl-[protein] + ATP = O-phospho-L-threonyl-[protein] + ADP + H(+)</text>
        <dbReference type="Rhea" id="RHEA:46608"/>
        <dbReference type="Rhea" id="RHEA-COMP:11060"/>
        <dbReference type="Rhea" id="RHEA-COMP:11605"/>
        <dbReference type="ChEBI" id="CHEBI:15378"/>
        <dbReference type="ChEBI" id="CHEBI:30013"/>
        <dbReference type="ChEBI" id="CHEBI:30616"/>
        <dbReference type="ChEBI" id="CHEBI:61977"/>
        <dbReference type="ChEBI" id="CHEBI:456216"/>
        <dbReference type="EC" id="2.7.11.1"/>
    </reaction>
</comment>
<comment type="cofactor">
    <cofactor evidence="5 6 7">
        <name>Mg(2+)</name>
        <dbReference type="ChEBI" id="CHEBI:18420"/>
    </cofactor>
</comment>
<comment type="subunit">
    <text evidence="5">Interacts with rac1A, rac1B, rac1C, racA, racB, racC and racF1.</text>
</comment>
<comment type="subcellular location">
    <subcellularLocation>
        <location evidence="5 7">Membrane</location>
    </subcellularLocation>
    <subcellularLocation>
        <location evidence="5 7">Cytoplasm</location>
        <location evidence="5 7">Cytoskeleton</location>
    </subcellularLocation>
    <text>Mainly cytosolic but enriched at the leading edge of migrating cells and at macropinocytic and phagocytic cups, possibly due to binding to acidic phospholipids.</text>
</comment>
<comment type="alternative products">
    <event type="alternative splicing"/>
    <isoform>
        <id>Q869N2-1</id>
        <name evidence="6 7">1</name>
        <sequence type="displayed"/>
    </isoform>
    <isoform>
        <id>Q869N2-2</id>
        <name evidence="8">2</name>
        <sequence type="described" ref="VSP_052996"/>
    </isoform>
</comment>
<comment type="PTM">
    <text evidence="7">Autophosphorylated at Ser-8. This may stimulate interaction with GTP-bound Rac family members which then further stimulates autophosphorylation and kinase activity.</text>
</comment>
<comment type="similarity">
    <text evidence="5 6 7">Belongs to the protein kinase superfamily. STE Ser/Thr protein kinase family. STE20 subfamily.</text>
</comment>
<comment type="sequence caution" evidence="11">
    <conflict type="frameshift">
        <sequence resource="EMBL-CDS" id="CAA71240"/>
    </conflict>
</comment>
<name>PAKB_DICDI</name>
<feature type="chain" id="PRO_0000361051" description="Serine/threonine-protein kinase pakB">
    <location>
        <begin position="1"/>
        <end position="852"/>
    </location>
</feature>
<feature type="domain" description="CRIB" evidence="2">
    <location>
        <begin position="356"/>
        <end position="369"/>
    </location>
</feature>
<feature type="domain" description="Protein kinase" evidence="3">
    <location>
        <begin position="570"/>
        <end position="823"/>
    </location>
</feature>
<feature type="region of interest" description="Disordered" evidence="4">
    <location>
        <begin position="1"/>
        <end position="334"/>
    </location>
</feature>
<feature type="region of interest" description="Disordered" evidence="4">
    <location>
        <begin position="419"/>
        <end position="526"/>
    </location>
</feature>
<feature type="compositionally biased region" description="Pro residues" evidence="4">
    <location>
        <begin position="24"/>
        <end position="35"/>
    </location>
</feature>
<feature type="compositionally biased region" description="Low complexity" evidence="4">
    <location>
        <begin position="44"/>
        <end position="56"/>
    </location>
</feature>
<feature type="compositionally biased region" description="Pro residues" evidence="4">
    <location>
        <begin position="57"/>
        <end position="74"/>
    </location>
</feature>
<feature type="compositionally biased region" description="Low complexity" evidence="4">
    <location>
        <begin position="90"/>
        <end position="117"/>
    </location>
</feature>
<feature type="compositionally biased region" description="Low complexity" evidence="4">
    <location>
        <begin position="124"/>
        <end position="163"/>
    </location>
</feature>
<feature type="compositionally biased region" description="Pro residues" evidence="4">
    <location>
        <begin position="181"/>
        <end position="191"/>
    </location>
</feature>
<feature type="compositionally biased region" description="Polar residues" evidence="4">
    <location>
        <begin position="201"/>
        <end position="210"/>
    </location>
</feature>
<feature type="compositionally biased region" description="Low complexity" evidence="4">
    <location>
        <begin position="246"/>
        <end position="270"/>
    </location>
</feature>
<feature type="compositionally biased region" description="Low complexity" evidence="4">
    <location>
        <begin position="293"/>
        <end position="317"/>
    </location>
</feature>
<feature type="compositionally biased region" description="Low complexity" evidence="4">
    <location>
        <begin position="419"/>
        <end position="433"/>
    </location>
</feature>
<feature type="compositionally biased region" description="Basic residues" evidence="4">
    <location>
        <begin position="470"/>
        <end position="485"/>
    </location>
</feature>
<feature type="compositionally biased region" description="Low complexity" evidence="4">
    <location>
        <begin position="486"/>
        <end position="514"/>
    </location>
</feature>
<feature type="active site" description="Proton acceptor" evidence="1 3">
    <location>
        <position position="691"/>
    </location>
</feature>
<feature type="binding site" evidence="1 3">
    <location>
        <begin position="576"/>
        <end position="584"/>
    </location>
    <ligand>
        <name>ATP</name>
        <dbReference type="ChEBI" id="CHEBI:30616"/>
    </ligand>
</feature>
<feature type="binding site" evidence="1 3">
    <location>
        <position position="599"/>
    </location>
    <ligand>
        <name>ATP</name>
        <dbReference type="ChEBI" id="CHEBI:30616"/>
    </ligand>
</feature>
<feature type="modified residue" description="Phosphoserine; by autocatalysis" evidence="7">
    <location>
        <position position="8"/>
    </location>
</feature>
<feature type="splice variant" id="VSP_052996" description="In isoform 2." evidence="10">
    <location>
        <begin position="413"/>
        <end position="440"/>
    </location>
</feature>
<feature type="mutagenesis site" description="No effect on autophosphorylation." evidence="7">
    <original>S</original>
    <variation>A</variation>
    <location>
        <position position="4"/>
    </location>
</feature>
<feature type="sequence conflict" description="In Ref. 1; AAC71063." evidence="11" ref="1">
    <location>
        <position position="310"/>
    </location>
</feature>
<organism>
    <name type="scientific">Dictyostelium discoideum</name>
    <name type="common">Social amoeba</name>
    <dbReference type="NCBI Taxonomy" id="44689"/>
    <lineage>
        <taxon>Eukaryota</taxon>
        <taxon>Amoebozoa</taxon>
        <taxon>Evosea</taxon>
        <taxon>Eumycetozoa</taxon>
        <taxon>Dictyostelia</taxon>
        <taxon>Dictyosteliales</taxon>
        <taxon>Dictyosteliaceae</taxon>
        <taxon>Dictyostelium</taxon>
    </lineage>
</organism>
<dbReference type="EC" id="2.7.11.1"/>
<dbReference type="EMBL" id="U67716">
    <property type="protein sequence ID" value="AAC71063.1"/>
    <property type="molecule type" value="mRNA"/>
</dbReference>
<dbReference type="EMBL" id="Y10158">
    <property type="protein sequence ID" value="CAA71240.1"/>
    <property type="status" value="ALT_FRAME"/>
    <property type="molecule type" value="mRNA"/>
</dbReference>
<dbReference type="EMBL" id="AAFI02000015">
    <property type="protein sequence ID" value="EAL69183.1"/>
    <property type="molecule type" value="Genomic_DNA"/>
</dbReference>
<dbReference type="RefSeq" id="XP_643105.1">
    <property type="nucleotide sequence ID" value="XM_638013.1"/>
</dbReference>
<dbReference type="SMR" id="Q869N2"/>
<dbReference type="FunCoup" id="Q869N2">
    <property type="interactions" value="75"/>
</dbReference>
<dbReference type="IntAct" id="Q869N2">
    <property type="interactions" value="11"/>
</dbReference>
<dbReference type="STRING" id="44689.Q869N2"/>
<dbReference type="GlyGen" id="Q869N2">
    <property type="glycosylation" value="3 sites"/>
</dbReference>
<dbReference type="iPTMnet" id="Q869N2"/>
<dbReference type="PaxDb" id="44689-DDB0191345"/>
<dbReference type="EnsemblProtists" id="EAL69183">
    <property type="protein sequence ID" value="EAL69183"/>
    <property type="gene ID" value="DDB_G0276459"/>
</dbReference>
<dbReference type="GeneID" id="8620509"/>
<dbReference type="KEGG" id="ddi:DDB_G0276459"/>
<dbReference type="dictyBase" id="DDB_G0276459">
    <property type="gene designation" value="pakB"/>
</dbReference>
<dbReference type="VEuPathDB" id="AmoebaDB:DDB_G0276459"/>
<dbReference type="eggNOG" id="KOG0578">
    <property type="taxonomic scope" value="Eukaryota"/>
</dbReference>
<dbReference type="HOGENOM" id="CLU_335071_0_0_1"/>
<dbReference type="InParanoid" id="Q869N2"/>
<dbReference type="OMA" id="FETGHEP"/>
<dbReference type="PhylomeDB" id="Q869N2"/>
<dbReference type="BRENDA" id="2.7.11.7">
    <property type="organism ID" value="1939"/>
</dbReference>
<dbReference type="Reactome" id="R-DDI-389359">
    <property type="pathway name" value="CD28 dependent Vav1 pathway"/>
</dbReference>
<dbReference type="Reactome" id="R-DDI-5627123">
    <property type="pathway name" value="RHO GTPases activate PAKs"/>
</dbReference>
<dbReference type="Reactome" id="R-DDI-5687128">
    <property type="pathway name" value="MAPK6/MAPK4 signaling"/>
</dbReference>
<dbReference type="Reactome" id="R-DDI-9013149">
    <property type="pathway name" value="RAC1 GTPase cycle"/>
</dbReference>
<dbReference type="Reactome" id="R-DDI-9013404">
    <property type="pathway name" value="RAC2 GTPase cycle"/>
</dbReference>
<dbReference type="Reactome" id="R-DDI-9013406">
    <property type="pathway name" value="RHOQ GTPase cycle"/>
</dbReference>
<dbReference type="Reactome" id="R-DDI-9013407">
    <property type="pathway name" value="RHOH GTPase cycle"/>
</dbReference>
<dbReference type="Reactome" id="R-DDI-9013408">
    <property type="pathway name" value="RHOG GTPase cycle"/>
</dbReference>
<dbReference type="Reactome" id="R-DDI-9013420">
    <property type="pathway name" value="RHOU GTPase cycle"/>
</dbReference>
<dbReference type="Reactome" id="R-DDI-9013423">
    <property type="pathway name" value="RAC3 GTPase cycle"/>
</dbReference>
<dbReference type="Reactome" id="R-DDI-9013424">
    <property type="pathway name" value="RHOV GTPase cycle"/>
</dbReference>
<dbReference type="PRO" id="PR:Q869N2"/>
<dbReference type="Proteomes" id="UP000002195">
    <property type="component" value="Chromosome 2"/>
</dbReference>
<dbReference type="GO" id="GO:0005938">
    <property type="term" value="C:cell cortex"/>
    <property type="evidence" value="ECO:0000314"/>
    <property type="project" value="dictyBase"/>
</dbReference>
<dbReference type="GO" id="GO:0031252">
    <property type="term" value="C:cell leading edge"/>
    <property type="evidence" value="ECO:0000314"/>
    <property type="project" value="dictyBase"/>
</dbReference>
<dbReference type="GO" id="GO:0005737">
    <property type="term" value="C:cytoplasm"/>
    <property type="evidence" value="ECO:0000318"/>
    <property type="project" value="GO_Central"/>
</dbReference>
<dbReference type="GO" id="GO:0005856">
    <property type="term" value="C:cytoskeleton"/>
    <property type="evidence" value="ECO:0007669"/>
    <property type="project" value="UniProtKB-SubCell"/>
</dbReference>
<dbReference type="GO" id="GO:0005829">
    <property type="term" value="C:cytosol"/>
    <property type="evidence" value="ECO:0000314"/>
    <property type="project" value="dictyBase"/>
</dbReference>
<dbReference type="GO" id="GO:0016020">
    <property type="term" value="C:membrane"/>
    <property type="evidence" value="ECO:0000314"/>
    <property type="project" value="dictyBase"/>
</dbReference>
<dbReference type="GO" id="GO:0001891">
    <property type="term" value="C:phagocytic cup"/>
    <property type="evidence" value="ECO:0000314"/>
    <property type="project" value="dictyBase"/>
</dbReference>
<dbReference type="GO" id="GO:0005886">
    <property type="term" value="C:plasma membrane"/>
    <property type="evidence" value="ECO:0000314"/>
    <property type="project" value="dictyBase"/>
</dbReference>
<dbReference type="GO" id="GO:0051015">
    <property type="term" value="F:actin filament binding"/>
    <property type="evidence" value="ECO:0000314"/>
    <property type="project" value="dictyBase"/>
</dbReference>
<dbReference type="GO" id="GO:0005524">
    <property type="term" value="F:ATP binding"/>
    <property type="evidence" value="ECO:0007669"/>
    <property type="project" value="UniProtKB-KW"/>
</dbReference>
<dbReference type="GO" id="GO:0005516">
    <property type="term" value="F:calmodulin binding"/>
    <property type="evidence" value="ECO:0000353"/>
    <property type="project" value="dictyBase"/>
</dbReference>
<dbReference type="GO" id="GO:0046872">
    <property type="term" value="F:metal ion binding"/>
    <property type="evidence" value="ECO:0007669"/>
    <property type="project" value="UniProtKB-KW"/>
</dbReference>
<dbReference type="GO" id="GO:0016905">
    <property type="term" value="F:myosin heavy chain kinase activity"/>
    <property type="evidence" value="ECO:0000314"/>
    <property type="project" value="dictyBase"/>
</dbReference>
<dbReference type="GO" id="GO:0005543">
    <property type="term" value="F:phospholipid binding"/>
    <property type="evidence" value="ECO:0000314"/>
    <property type="project" value="dictyBase"/>
</dbReference>
<dbReference type="GO" id="GO:0106310">
    <property type="term" value="F:protein serine kinase activity"/>
    <property type="evidence" value="ECO:0000314"/>
    <property type="project" value="dictyBase"/>
</dbReference>
<dbReference type="GO" id="GO:0004674">
    <property type="term" value="F:protein serine/threonine kinase activity"/>
    <property type="evidence" value="ECO:0000314"/>
    <property type="project" value="dictyBase"/>
</dbReference>
<dbReference type="GO" id="GO:0031267">
    <property type="term" value="F:small GTPase binding"/>
    <property type="evidence" value="ECO:0000353"/>
    <property type="project" value="dictyBase"/>
</dbReference>
<dbReference type="GO" id="GO:0031152">
    <property type="term" value="P:aggregation involved in sorocarp development"/>
    <property type="evidence" value="ECO:0000316"/>
    <property type="project" value="dictyBase"/>
</dbReference>
<dbReference type="GO" id="GO:0009267">
    <property type="term" value="P:cellular response to starvation"/>
    <property type="evidence" value="ECO:0000318"/>
    <property type="project" value="GO_Central"/>
</dbReference>
<dbReference type="GO" id="GO:0007163">
    <property type="term" value="P:establishment or maintenance of cell polarity"/>
    <property type="evidence" value="ECO:0000316"/>
    <property type="project" value="dictyBase"/>
</dbReference>
<dbReference type="GO" id="GO:0035556">
    <property type="term" value="P:intracellular signal transduction"/>
    <property type="evidence" value="ECO:0000318"/>
    <property type="project" value="GO_Central"/>
</dbReference>
<dbReference type="GO" id="GO:0000281">
    <property type="term" value="P:mitotic cytokinesis"/>
    <property type="evidence" value="ECO:0000315"/>
    <property type="project" value="dictyBase"/>
</dbReference>
<dbReference type="GO" id="GO:0006909">
    <property type="term" value="P:phagocytosis"/>
    <property type="evidence" value="ECO:0007669"/>
    <property type="project" value="UniProtKB-KW"/>
</dbReference>
<dbReference type="GO" id="GO:0006907">
    <property type="term" value="P:pinocytosis"/>
    <property type="evidence" value="ECO:0000315"/>
    <property type="project" value="dictyBase"/>
</dbReference>
<dbReference type="GO" id="GO:0050766">
    <property type="term" value="P:positive regulation of phagocytosis"/>
    <property type="evidence" value="ECO:0000315"/>
    <property type="project" value="dictyBase"/>
</dbReference>
<dbReference type="GO" id="GO:1902463">
    <property type="term" value="P:protein localization to cell leading edge"/>
    <property type="evidence" value="ECO:0000314"/>
    <property type="project" value="dictyBase"/>
</dbReference>
<dbReference type="GO" id="GO:0043408">
    <property type="term" value="P:regulation of MAPK cascade"/>
    <property type="evidence" value="ECO:0000318"/>
    <property type="project" value="GO_Central"/>
</dbReference>
<dbReference type="CDD" id="cd01093">
    <property type="entry name" value="CRIB_PAK_like"/>
    <property type="match status" value="1"/>
</dbReference>
<dbReference type="CDD" id="cd06614">
    <property type="entry name" value="STKc_PAK"/>
    <property type="match status" value="1"/>
</dbReference>
<dbReference type="FunFam" id="3.30.200.20:FF:001063">
    <property type="entry name" value="Non-specific serine/threonine protein kinase"/>
    <property type="match status" value="1"/>
</dbReference>
<dbReference type="FunFam" id="3.90.810.10:FF:000028">
    <property type="entry name" value="Non-specific serine/threonine protein kinase"/>
    <property type="match status" value="1"/>
</dbReference>
<dbReference type="FunFam" id="1.10.510.10:FF:000802">
    <property type="entry name" value="Serine/threonine protein kinase"/>
    <property type="match status" value="1"/>
</dbReference>
<dbReference type="Gene3D" id="3.90.810.10">
    <property type="entry name" value="CRIB domain"/>
    <property type="match status" value="1"/>
</dbReference>
<dbReference type="Gene3D" id="3.30.200.20">
    <property type="entry name" value="Phosphorylase Kinase, domain 1"/>
    <property type="match status" value="1"/>
</dbReference>
<dbReference type="Gene3D" id="1.10.510.10">
    <property type="entry name" value="Transferase(Phosphotransferase) domain 1"/>
    <property type="match status" value="1"/>
</dbReference>
<dbReference type="InterPro" id="IPR000095">
    <property type="entry name" value="CRIB_dom"/>
</dbReference>
<dbReference type="InterPro" id="IPR036936">
    <property type="entry name" value="CRIB_dom_sf"/>
</dbReference>
<dbReference type="InterPro" id="IPR011009">
    <property type="entry name" value="Kinase-like_dom_sf"/>
</dbReference>
<dbReference type="InterPro" id="IPR051931">
    <property type="entry name" value="PAK3-like"/>
</dbReference>
<dbReference type="InterPro" id="IPR033923">
    <property type="entry name" value="PAK_BD"/>
</dbReference>
<dbReference type="InterPro" id="IPR000719">
    <property type="entry name" value="Prot_kinase_dom"/>
</dbReference>
<dbReference type="PANTHER" id="PTHR45832">
    <property type="entry name" value="SERINE/THREONINE-PROTEIN KINASE SAMKA-RELATED-RELATED"/>
    <property type="match status" value="1"/>
</dbReference>
<dbReference type="PANTHER" id="PTHR45832:SF22">
    <property type="entry name" value="SERINE_THREONINE-PROTEIN KINASE SAMKA-RELATED"/>
    <property type="match status" value="1"/>
</dbReference>
<dbReference type="Pfam" id="PF00786">
    <property type="entry name" value="PBD"/>
    <property type="match status" value="1"/>
</dbReference>
<dbReference type="Pfam" id="PF00069">
    <property type="entry name" value="Pkinase"/>
    <property type="match status" value="1"/>
</dbReference>
<dbReference type="SMART" id="SM00285">
    <property type="entry name" value="PBD"/>
    <property type="match status" value="1"/>
</dbReference>
<dbReference type="SMART" id="SM00220">
    <property type="entry name" value="S_TKc"/>
    <property type="match status" value="1"/>
</dbReference>
<dbReference type="SUPFAM" id="SSF56112">
    <property type="entry name" value="Protein kinase-like (PK-like)"/>
    <property type="match status" value="1"/>
</dbReference>
<dbReference type="PROSITE" id="PS50108">
    <property type="entry name" value="CRIB"/>
    <property type="match status" value="1"/>
</dbReference>
<dbReference type="PROSITE" id="PS50011">
    <property type="entry name" value="PROTEIN_KINASE_DOM"/>
    <property type="match status" value="1"/>
</dbReference>